<proteinExistence type="inferred from homology"/>
<reference key="1">
    <citation type="journal article" date="2007" name="Mol. Phylogenet. Evol.">
        <title>Phylogenetic and evolutionary implications of complete chloroplast genome sequences of four early-diverging angiosperms: Buxus (Buxaceae), Chloranthus (Chloranthaceae), Dioscorea (Dioscoreaceae), and Illicium (Schisandraceae).</title>
        <authorList>
            <person name="Hansen D.R."/>
            <person name="Dastidar S.G."/>
            <person name="Cai Z."/>
            <person name="Penaflor C."/>
            <person name="Kuehl J.V."/>
            <person name="Boore J.L."/>
            <person name="Jansen R.K."/>
        </authorList>
    </citation>
    <scope>NUCLEOTIDE SEQUENCE [LARGE SCALE GENOMIC DNA]</scope>
</reference>
<gene>
    <name evidence="1" type="primary">psaB</name>
</gene>
<dbReference type="EC" id="1.97.1.12" evidence="1"/>
<dbReference type="EMBL" id="EF380354">
    <property type="protein sequence ID" value="ABQ52518.1"/>
    <property type="molecule type" value="Genomic_DNA"/>
</dbReference>
<dbReference type="RefSeq" id="YP_001294269.1">
    <property type="nucleotide sequence ID" value="NC_009600.1"/>
</dbReference>
<dbReference type="SMR" id="A6MMU3"/>
<dbReference type="GeneID" id="5236724"/>
<dbReference type="GO" id="GO:0009535">
    <property type="term" value="C:chloroplast thylakoid membrane"/>
    <property type="evidence" value="ECO:0007669"/>
    <property type="project" value="UniProtKB-SubCell"/>
</dbReference>
<dbReference type="GO" id="GO:0009522">
    <property type="term" value="C:photosystem I"/>
    <property type="evidence" value="ECO:0007669"/>
    <property type="project" value="UniProtKB-KW"/>
</dbReference>
<dbReference type="GO" id="GO:0051539">
    <property type="term" value="F:4 iron, 4 sulfur cluster binding"/>
    <property type="evidence" value="ECO:0007669"/>
    <property type="project" value="UniProtKB-KW"/>
</dbReference>
<dbReference type="GO" id="GO:0016168">
    <property type="term" value="F:chlorophyll binding"/>
    <property type="evidence" value="ECO:0007669"/>
    <property type="project" value="UniProtKB-KW"/>
</dbReference>
<dbReference type="GO" id="GO:0009055">
    <property type="term" value="F:electron transfer activity"/>
    <property type="evidence" value="ECO:0007669"/>
    <property type="project" value="UniProtKB-UniRule"/>
</dbReference>
<dbReference type="GO" id="GO:0000287">
    <property type="term" value="F:magnesium ion binding"/>
    <property type="evidence" value="ECO:0007669"/>
    <property type="project" value="UniProtKB-UniRule"/>
</dbReference>
<dbReference type="GO" id="GO:0016491">
    <property type="term" value="F:oxidoreductase activity"/>
    <property type="evidence" value="ECO:0007669"/>
    <property type="project" value="UniProtKB-KW"/>
</dbReference>
<dbReference type="GO" id="GO:0015979">
    <property type="term" value="P:photosynthesis"/>
    <property type="evidence" value="ECO:0007669"/>
    <property type="project" value="UniProtKB-UniRule"/>
</dbReference>
<dbReference type="FunFam" id="1.20.1130.10:FF:000001">
    <property type="entry name" value="Photosystem I P700 chlorophyll a apoprotein A2"/>
    <property type="match status" value="1"/>
</dbReference>
<dbReference type="Gene3D" id="1.20.1130.10">
    <property type="entry name" value="Photosystem I PsaA/PsaB"/>
    <property type="match status" value="1"/>
</dbReference>
<dbReference type="HAMAP" id="MF_00482">
    <property type="entry name" value="PSI_PsaB"/>
    <property type="match status" value="1"/>
</dbReference>
<dbReference type="InterPro" id="IPR001280">
    <property type="entry name" value="PSI_PsaA/B"/>
</dbReference>
<dbReference type="InterPro" id="IPR020586">
    <property type="entry name" value="PSI_PsaA/B_CS"/>
</dbReference>
<dbReference type="InterPro" id="IPR036408">
    <property type="entry name" value="PSI_PsaA/B_sf"/>
</dbReference>
<dbReference type="InterPro" id="IPR006244">
    <property type="entry name" value="PSI_PsaB"/>
</dbReference>
<dbReference type="NCBIfam" id="TIGR01336">
    <property type="entry name" value="psaB"/>
    <property type="match status" value="1"/>
</dbReference>
<dbReference type="PANTHER" id="PTHR30128">
    <property type="entry name" value="OUTER MEMBRANE PROTEIN, OMPA-RELATED"/>
    <property type="match status" value="1"/>
</dbReference>
<dbReference type="PANTHER" id="PTHR30128:SF19">
    <property type="entry name" value="PHOTOSYSTEM I P700 CHLOROPHYLL A APOPROTEIN A1-RELATED"/>
    <property type="match status" value="1"/>
</dbReference>
<dbReference type="Pfam" id="PF00223">
    <property type="entry name" value="PsaA_PsaB"/>
    <property type="match status" value="1"/>
</dbReference>
<dbReference type="PIRSF" id="PIRSF002905">
    <property type="entry name" value="PSI_A"/>
    <property type="match status" value="1"/>
</dbReference>
<dbReference type="PRINTS" id="PR00257">
    <property type="entry name" value="PHOTSYSPSAAB"/>
</dbReference>
<dbReference type="SUPFAM" id="SSF81558">
    <property type="entry name" value="Photosystem I subunits PsaA/PsaB"/>
    <property type="match status" value="1"/>
</dbReference>
<dbReference type="PROSITE" id="PS00419">
    <property type="entry name" value="PHOTOSYSTEM_I_PSAAB"/>
    <property type="match status" value="1"/>
</dbReference>
<geneLocation type="chloroplast"/>
<organism>
    <name type="scientific">Illicium oligandrum</name>
    <name type="common">Star anise</name>
    <dbReference type="NCBI Taxonomy" id="145286"/>
    <lineage>
        <taxon>Eukaryota</taxon>
        <taxon>Viridiplantae</taxon>
        <taxon>Streptophyta</taxon>
        <taxon>Embryophyta</taxon>
        <taxon>Tracheophyta</taxon>
        <taxon>Spermatophyta</taxon>
        <taxon>Magnoliopsida</taxon>
        <taxon>Austrobaileyales</taxon>
        <taxon>Schisandraceae</taxon>
        <taxon>Illicium</taxon>
    </lineage>
</organism>
<comment type="function">
    <text evidence="1">PsaA and PsaB bind P700, the primary electron donor of photosystem I (PSI), as well as the electron acceptors A0, A1 and FX. PSI is a plastocyanin-ferredoxin oxidoreductase, converting photonic excitation into a charge separation, which transfers an electron from the donor P700 chlorophyll pair to the spectroscopically characterized acceptors A0, A1, FX, FA and FB in turn. Oxidized P700 is reduced on the lumenal side of the thylakoid membrane by plastocyanin.</text>
</comment>
<comment type="catalytic activity">
    <reaction evidence="1">
        <text>reduced [plastocyanin] + hnu + oxidized [2Fe-2S]-[ferredoxin] = oxidized [plastocyanin] + reduced [2Fe-2S]-[ferredoxin]</text>
        <dbReference type="Rhea" id="RHEA:30407"/>
        <dbReference type="Rhea" id="RHEA-COMP:10000"/>
        <dbReference type="Rhea" id="RHEA-COMP:10001"/>
        <dbReference type="Rhea" id="RHEA-COMP:10039"/>
        <dbReference type="Rhea" id="RHEA-COMP:10040"/>
        <dbReference type="ChEBI" id="CHEBI:29036"/>
        <dbReference type="ChEBI" id="CHEBI:30212"/>
        <dbReference type="ChEBI" id="CHEBI:33737"/>
        <dbReference type="ChEBI" id="CHEBI:33738"/>
        <dbReference type="ChEBI" id="CHEBI:49552"/>
        <dbReference type="EC" id="1.97.1.12"/>
    </reaction>
</comment>
<comment type="cofactor">
    <text evidence="1">P700 is a chlorophyll a/chlorophyll a' dimer, A0 is one or more chlorophyll a, A1 is one or both phylloquinones and FX is a shared 4Fe-4S iron-sulfur center.</text>
</comment>
<comment type="subunit">
    <text evidence="1">The PsaA/B heterodimer binds the P700 chlorophyll special pair and subsequent electron acceptors. PSI consists of a core antenna complex that captures photons, and an electron transfer chain that converts photonic excitation into a charge separation. The eukaryotic PSI reaction center is composed of at least 11 subunits.</text>
</comment>
<comment type="subcellular location">
    <subcellularLocation>
        <location evidence="1">Plastid</location>
        <location evidence="1">Chloroplast thylakoid membrane</location>
        <topology evidence="1">Multi-pass membrane protein</topology>
    </subcellularLocation>
</comment>
<comment type="similarity">
    <text evidence="1">Belongs to the PsaA/PsaB family.</text>
</comment>
<sequence length="734" mass="82419">MALRFPRFSQGLAQDPTTRRIWFGIATAHDFESHDDITEERLYQNIFASHFGQLAIIFLWTSGNLFHVAWQGNFESWVQDPLHVRPIAHAIWDPHFGQPAVEAFTRGGALGPVNIAYSGVYQWWYTIGLRTNEDLYTGALFLLFLSAISLIAGWLHLQPKWKPSVSWFKNAESRLNHHLSGLFGVSSLAWTGHLVHVAIPGSRGEYVRWNNFLDVLPYPQGLGPLFTGQWNLYAQNPDSSSHLFGTSQGAGTAILTLLGGFHPQTQSLWLTDIAHHHLAIAFVFLVAGHMYRTNFGIGHSMKDLLEAHIPPGGRLGRGHKGLYDTINNSIHFQLGLALASLGVITSLVAQHMYSLPAYAFIAQDFTTQAALYTHHQYIAGFIMTGAFAHGAIFFIRDYNPEQNEDNVLARMLDHKEAIKSHLSWASLFLGFHTLGLYVHNDVMLAFGTPEKQILIEPIFAQWIQSAHGKTSYGFDVLLSSTNGPAFNAGRSIWLPGWLNAINENGNSLFLTIGPGDFLVHHAIALGLHTTTLILVKGALDARGSKLMPDKKDFGYSFPCDGPGRGGTCDISAWDAFYLAVFWMLNTIGWVTFYWHWKHITLWQGNVSQFNESSTYLMGWLRDYLWLNSSQLINGYNPFGTNSLSVWAWMFLFGHLVWATGFMFLISWRGYWQELIETLAWAHERTPLANLIRWRDKPVALSIVQARLVGLAHFSVGYIFTYAAFLIASTSGKFG</sequence>
<accession>A6MMU3</accession>
<evidence type="ECO:0000255" key="1">
    <source>
        <dbReference type="HAMAP-Rule" id="MF_00482"/>
    </source>
</evidence>
<feature type="chain" id="PRO_0000300047" description="Photosystem I P700 chlorophyll a apoprotein A2">
    <location>
        <begin position="1"/>
        <end position="734"/>
    </location>
</feature>
<feature type="transmembrane region" description="Helical; Name=I" evidence="1">
    <location>
        <begin position="46"/>
        <end position="69"/>
    </location>
</feature>
<feature type="transmembrane region" description="Helical; Name=II" evidence="1">
    <location>
        <begin position="135"/>
        <end position="158"/>
    </location>
</feature>
<feature type="transmembrane region" description="Helical; Name=III" evidence="1">
    <location>
        <begin position="175"/>
        <end position="199"/>
    </location>
</feature>
<feature type="transmembrane region" description="Helical; Name=IV" evidence="1">
    <location>
        <begin position="273"/>
        <end position="291"/>
    </location>
</feature>
<feature type="transmembrane region" description="Helical; Name=V" evidence="1">
    <location>
        <begin position="330"/>
        <end position="353"/>
    </location>
</feature>
<feature type="transmembrane region" description="Helical; Name=VI" evidence="1">
    <location>
        <begin position="369"/>
        <end position="395"/>
    </location>
</feature>
<feature type="transmembrane region" description="Helical; Name=VII" evidence="1">
    <location>
        <begin position="417"/>
        <end position="439"/>
    </location>
</feature>
<feature type="transmembrane region" description="Helical; Name=VIII" evidence="1">
    <location>
        <begin position="517"/>
        <end position="535"/>
    </location>
</feature>
<feature type="transmembrane region" description="Helical; Name=IX" evidence="1">
    <location>
        <begin position="575"/>
        <end position="596"/>
    </location>
</feature>
<feature type="transmembrane region" description="Helical; Name=X" evidence="1">
    <location>
        <begin position="643"/>
        <end position="665"/>
    </location>
</feature>
<feature type="transmembrane region" description="Helical; Name=XI" evidence="1">
    <location>
        <begin position="707"/>
        <end position="727"/>
    </location>
</feature>
<feature type="binding site" evidence="1">
    <location>
        <position position="559"/>
    </location>
    <ligand>
        <name>[4Fe-4S] cluster</name>
        <dbReference type="ChEBI" id="CHEBI:49883"/>
        <note>ligand shared between dimeric partners</note>
    </ligand>
</feature>
<feature type="binding site" evidence="1">
    <location>
        <position position="568"/>
    </location>
    <ligand>
        <name>[4Fe-4S] cluster</name>
        <dbReference type="ChEBI" id="CHEBI:49883"/>
        <note>ligand shared between dimeric partners</note>
    </ligand>
</feature>
<feature type="binding site" description="axial binding residue" evidence="1">
    <location>
        <position position="654"/>
    </location>
    <ligand>
        <name>chlorophyll a</name>
        <dbReference type="ChEBI" id="CHEBI:58416"/>
        <label>B1</label>
    </ligand>
    <ligandPart>
        <name>Mg</name>
        <dbReference type="ChEBI" id="CHEBI:25107"/>
    </ligandPart>
</feature>
<feature type="binding site" description="axial binding residue" evidence="1">
    <location>
        <position position="662"/>
    </location>
    <ligand>
        <name>chlorophyll a</name>
        <dbReference type="ChEBI" id="CHEBI:58416"/>
        <label>B3</label>
    </ligand>
    <ligandPart>
        <name>Mg</name>
        <dbReference type="ChEBI" id="CHEBI:25107"/>
    </ligandPart>
</feature>
<feature type="binding site" evidence="1">
    <location>
        <position position="670"/>
    </location>
    <ligand>
        <name>chlorophyll a</name>
        <dbReference type="ChEBI" id="CHEBI:58416"/>
        <label>B3</label>
    </ligand>
</feature>
<feature type="binding site" evidence="1">
    <location>
        <position position="671"/>
    </location>
    <ligand>
        <name>phylloquinone</name>
        <dbReference type="ChEBI" id="CHEBI:18067"/>
        <label>B</label>
    </ligand>
</feature>
<name>PSAB_ILLOL</name>
<keyword id="KW-0004">4Fe-4S</keyword>
<keyword id="KW-0148">Chlorophyll</keyword>
<keyword id="KW-0150">Chloroplast</keyword>
<keyword id="KW-0157">Chromophore</keyword>
<keyword id="KW-0249">Electron transport</keyword>
<keyword id="KW-0408">Iron</keyword>
<keyword id="KW-0411">Iron-sulfur</keyword>
<keyword id="KW-0460">Magnesium</keyword>
<keyword id="KW-0472">Membrane</keyword>
<keyword id="KW-0479">Metal-binding</keyword>
<keyword id="KW-0560">Oxidoreductase</keyword>
<keyword id="KW-0602">Photosynthesis</keyword>
<keyword id="KW-0603">Photosystem I</keyword>
<keyword id="KW-0934">Plastid</keyword>
<keyword id="KW-0793">Thylakoid</keyword>
<keyword id="KW-0812">Transmembrane</keyword>
<keyword id="KW-1133">Transmembrane helix</keyword>
<keyword id="KW-0813">Transport</keyword>
<protein>
    <recommendedName>
        <fullName evidence="1">Photosystem I P700 chlorophyll a apoprotein A2</fullName>
        <ecNumber evidence="1">1.97.1.12</ecNumber>
    </recommendedName>
    <alternativeName>
        <fullName evidence="1">PSI-B</fullName>
    </alternativeName>
    <alternativeName>
        <fullName evidence="1">PsaB</fullName>
    </alternativeName>
</protein>